<keyword id="KW-0414">Isoprene biosynthesis</keyword>
<keyword id="KW-0548">Nucleotidyltransferase</keyword>
<keyword id="KW-1185">Reference proteome</keyword>
<keyword id="KW-0808">Transferase</keyword>
<dbReference type="EC" id="2.7.7.60" evidence="1"/>
<dbReference type="EMBL" id="CP000724">
    <property type="protein sequence ID" value="ABR50578.1"/>
    <property type="molecule type" value="Genomic_DNA"/>
</dbReference>
<dbReference type="RefSeq" id="WP_012065469.1">
    <property type="nucleotide sequence ID" value="NC_009633.1"/>
</dbReference>
<dbReference type="SMR" id="A6TWL0"/>
<dbReference type="STRING" id="293826.Amet_4506"/>
<dbReference type="KEGG" id="amt:Amet_4506"/>
<dbReference type="eggNOG" id="COG1211">
    <property type="taxonomic scope" value="Bacteria"/>
</dbReference>
<dbReference type="HOGENOM" id="CLU_061281_2_2_9"/>
<dbReference type="OrthoDB" id="9806837at2"/>
<dbReference type="UniPathway" id="UPA00056">
    <property type="reaction ID" value="UER00093"/>
</dbReference>
<dbReference type="Proteomes" id="UP000001572">
    <property type="component" value="Chromosome"/>
</dbReference>
<dbReference type="GO" id="GO:0050518">
    <property type="term" value="F:2-C-methyl-D-erythritol 4-phosphate cytidylyltransferase activity"/>
    <property type="evidence" value="ECO:0007669"/>
    <property type="project" value="UniProtKB-UniRule"/>
</dbReference>
<dbReference type="GO" id="GO:0019288">
    <property type="term" value="P:isopentenyl diphosphate biosynthetic process, methylerythritol 4-phosphate pathway"/>
    <property type="evidence" value="ECO:0007669"/>
    <property type="project" value="UniProtKB-UniRule"/>
</dbReference>
<dbReference type="CDD" id="cd02516">
    <property type="entry name" value="CDP-ME_synthetase"/>
    <property type="match status" value="1"/>
</dbReference>
<dbReference type="FunFam" id="3.90.550.10:FF:000003">
    <property type="entry name" value="2-C-methyl-D-erythritol 4-phosphate cytidylyltransferase"/>
    <property type="match status" value="1"/>
</dbReference>
<dbReference type="Gene3D" id="3.90.550.10">
    <property type="entry name" value="Spore Coat Polysaccharide Biosynthesis Protein SpsA, Chain A"/>
    <property type="match status" value="1"/>
</dbReference>
<dbReference type="HAMAP" id="MF_00108">
    <property type="entry name" value="IspD"/>
    <property type="match status" value="1"/>
</dbReference>
<dbReference type="InterPro" id="IPR001228">
    <property type="entry name" value="IspD"/>
</dbReference>
<dbReference type="InterPro" id="IPR034683">
    <property type="entry name" value="IspD/TarI"/>
</dbReference>
<dbReference type="InterPro" id="IPR050088">
    <property type="entry name" value="IspD/TarI_cytidylyltransf_bact"/>
</dbReference>
<dbReference type="InterPro" id="IPR018294">
    <property type="entry name" value="ISPD_synthase_CS"/>
</dbReference>
<dbReference type="InterPro" id="IPR029044">
    <property type="entry name" value="Nucleotide-diphossugar_trans"/>
</dbReference>
<dbReference type="NCBIfam" id="TIGR00453">
    <property type="entry name" value="ispD"/>
    <property type="match status" value="1"/>
</dbReference>
<dbReference type="PANTHER" id="PTHR32125">
    <property type="entry name" value="2-C-METHYL-D-ERYTHRITOL 4-PHOSPHATE CYTIDYLYLTRANSFERASE, CHLOROPLASTIC"/>
    <property type="match status" value="1"/>
</dbReference>
<dbReference type="PANTHER" id="PTHR32125:SF4">
    <property type="entry name" value="2-C-METHYL-D-ERYTHRITOL 4-PHOSPHATE CYTIDYLYLTRANSFERASE, CHLOROPLASTIC"/>
    <property type="match status" value="1"/>
</dbReference>
<dbReference type="Pfam" id="PF01128">
    <property type="entry name" value="IspD"/>
    <property type="match status" value="1"/>
</dbReference>
<dbReference type="SUPFAM" id="SSF53448">
    <property type="entry name" value="Nucleotide-diphospho-sugar transferases"/>
    <property type="match status" value="1"/>
</dbReference>
<dbReference type="PROSITE" id="PS01295">
    <property type="entry name" value="ISPD"/>
    <property type="match status" value="1"/>
</dbReference>
<name>ISPD_ALKMQ</name>
<sequence>MAVASKVTVIVVAAGKGKRMGRSYNKQYIMLENKPILYHTLAVFEKHSEINEIILVVASGEEEYCQGQIIKKYGLKKVRKVVAGGSERRNSVKNGLEELEEACEVVLVHDGARPFITKEVITKSIEVAYEEGAVIVAVPVKDTIKRVNEKMEVVETPERQQLWAVQTPQVFRSGILKRAYKEAEDFERVGTDDAVLVEAAGYTVKVVLGIYENIKVTTPEDLIIGQGILNQRKDGEQCEWE</sequence>
<organism>
    <name type="scientific">Alkaliphilus metalliredigens (strain QYMF)</name>
    <dbReference type="NCBI Taxonomy" id="293826"/>
    <lineage>
        <taxon>Bacteria</taxon>
        <taxon>Bacillati</taxon>
        <taxon>Bacillota</taxon>
        <taxon>Clostridia</taxon>
        <taxon>Peptostreptococcales</taxon>
        <taxon>Natronincolaceae</taxon>
        <taxon>Alkaliphilus</taxon>
    </lineage>
</organism>
<gene>
    <name evidence="1" type="primary">ispD</name>
    <name type="ordered locus">Amet_4506</name>
</gene>
<evidence type="ECO:0000255" key="1">
    <source>
        <dbReference type="HAMAP-Rule" id="MF_00108"/>
    </source>
</evidence>
<proteinExistence type="inferred from homology"/>
<reference key="1">
    <citation type="journal article" date="2016" name="Genome Announc.">
        <title>Complete genome sequence of Alkaliphilus metalliredigens strain QYMF, an alkaliphilic and metal-reducing bacterium isolated from borax-contaminated leachate ponds.</title>
        <authorList>
            <person name="Hwang C."/>
            <person name="Copeland A."/>
            <person name="Lucas S."/>
            <person name="Lapidus A."/>
            <person name="Barry K."/>
            <person name="Detter J.C."/>
            <person name="Glavina Del Rio T."/>
            <person name="Hammon N."/>
            <person name="Israni S."/>
            <person name="Dalin E."/>
            <person name="Tice H."/>
            <person name="Pitluck S."/>
            <person name="Chertkov O."/>
            <person name="Brettin T."/>
            <person name="Bruce D."/>
            <person name="Han C."/>
            <person name="Schmutz J."/>
            <person name="Larimer F."/>
            <person name="Land M.L."/>
            <person name="Hauser L."/>
            <person name="Kyrpides N."/>
            <person name="Mikhailova N."/>
            <person name="Ye Q."/>
            <person name="Zhou J."/>
            <person name="Richardson P."/>
            <person name="Fields M.W."/>
        </authorList>
    </citation>
    <scope>NUCLEOTIDE SEQUENCE [LARGE SCALE GENOMIC DNA]</scope>
    <source>
        <strain>QYMF</strain>
    </source>
</reference>
<comment type="function">
    <text evidence="1">Catalyzes the formation of 4-diphosphocytidyl-2-C-methyl-D-erythritol from CTP and 2-C-methyl-D-erythritol 4-phosphate (MEP).</text>
</comment>
<comment type="catalytic activity">
    <reaction evidence="1">
        <text>2-C-methyl-D-erythritol 4-phosphate + CTP + H(+) = 4-CDP-2-C-methyl-D-erythritol + diphosphate</text>
        <dbReference type="Rhea" id="RHEA:13429"/>
        <dbReference type="ChEBI" id="CHEBI:15378"/>
        <dbReference type="ChEBI" id="CHEBI:33019"/>
        <dbReference type="ChEBI" id="CHEBI:37563"/>
        <dbReference type="ChEBI" id="CHEBI:57823"/>
        <dbReference type="ChEBI" id="CHEBI:58262"/>
        <dbReference type="EC" id="2.7.7.60"/>
    </reaction>
</comment>
<comment type="pathway">
    <text evidence="1">Isoprenoid biosynthesis; isopentenyl diphosphate biosynthesis via DXP pathway; isopentenyl diphosphate from 1-deoxy-D-xylulose 5-phosphate: step 2/6.</text>
</comment>
<comment type="similarity">
    <text evidence="1">Belongs to the IspD/TarI cytidylyltransferase family. IspD subfamily.</text>
</comment>
<protein>
    <recommendedName>
        <fullName evidence="1">2-C-methyl-D-erythritol 4-phosphate cytidylyltransferase</fullName>
        <ecNumber evidence="1">2.7.7.60</ecNumber>
    </recommendedName>
    <alternativeName>
        <fullName evidence="1">4-diphosphocytidyl-2C-methyl-D-erythritol synthase</fullName>
    </alternativeName>
    <alternativeName>
        <fullName evidence="1">MEP cytidylyltransferase</fullName>
        <shortName evidence="1">MCT</shortName>
    </alternativeName>
</protein>
<accession>A6TWL0</accession>
<feature type="chain" id="PRO_1000075926" description="2-C-methyl-D-erythritol 4-phosphate cytidylyltransferase">
    <location>
        <begin position="1"/>
        <end position="241"/>
    </location>
</feature>
<feature type="site" description="Transition state stabilizer" evidence="1">
    <location>
        <position position="19"/>
    </location>
</feature>
<feature type="site" description="Transition state stabilizer" evidence="1">
    <location>
        <position position="26"/>
    </location>
</feature>
<feature type="site" description="Positions MEP for the nucleophilic attack" evidence="1">
    <location>
        <position position="159"/>
    </location>
</feature>
<feature type="site" description="Positions MEP for the nucleophilic attack" evidence="1">
    <location>
        <position position="215"/>
    </location>
</feature>